<comment type="function">
    <text evidence="1">Negative regulator of class I heat shock genes (grpE-dnaK-dnaJ and groELS operons). Prevents heat-shock induction of these operons.</text>
</comment>
<comment type="similarity">
    <text evidence="1">Belongs to the HrcA family.</text>
</comment>
<organism>
    <name type="scientific">Staphylococcus aureus (strain bovine RF122 / ET3-1)</name>
    <dbReference type="NCBI Taxonomy" id="273036"/>
    <lineage>
        <taxon>Bacteria</taxon>
        <taxon>Bacillati</taxon>
        <taxon>Bacillota</taxon>
        <taxon>Bacilli</taxon>
        <taxon>Bacillales</taxon>
        <taxon>Staphylococcaceae</taxon>
        <taxon>Staphylococcus</taxon>
    </lineage>
</organism>
<protein>
    <recommendedName>
        <fullName evidence="1">Heat-inducible transcription repressor HrcA</fullName>
    </recommendedName>
</protein>
<gene>
    <name evidence="1" type="primary">hrcA</name>
    <name type="ordered locus">SAB1454c</name>
</gene>
<dbReference type="EMBL" id="AJ938182">
    <property type="protein sequence ID" value="CAI81143.1"/>
    <property type="molecule type" value="Genomic_DNA"/>
</dbReference>
<dbReference type="RefSeq" id="WP_000627138.1">
    <property type="nucleotide sequence ID" value="NC_007622.1"/>
</dbReference>
<dbReference type="SMR" id="Q2YT45"/>
<dbReference type="KEGG" id="sab:SAB1454c"/>
<dbReference type="HOGENOM" id="CLU_050019_1_0_9"/>
<dbReference type="GO" id="GO:0003677">
    <property type="term" value="F:DNA binding"/>
    <property type="evidence" value="ECO:0007669"/>
    <property type="project" value="InterPro"/>
</dbReference>
<dbReference type="GO" id="GO:0045892">
    <property type="term" value="P:negative regulation of DNA-templated transcription"/>
    <property type="evidence" value="ECO:0007669"/>
    <property type="project" value="UniProtKB-UniRule"/>
</dbReference>
<dbReference type="FunFam" id="1.10.10.10:FF:000049">
    <property type="entry name" value="Heat-inducible transcription repressor HrcA"/>
    <property type="match status" value="1"/>
</dbReference>
<dbReference type="Gene3D" id="3.30.450.40">
    <property type="match status" value="1"/>
</dbReference>
<dbReference type="Gene3D" id="3.30.390.60">
    <property type="entry name" value="Heat-inducible transcription repressor hrca homolog, domain 3"/>
    <property type="match status" value="1"/>
</dbReference>
<dbReference type="Gene3D" id="1.10.10.10">
    <property type="entry name" value="Winged helix-like DNA-binding domain superfamily/Winged helix DNA-binding domain"/>
    <property type="match status" value="1"/>
</dbReference>
<dbReference type="HAMAP" id="MF_00081">
    <property type="entry name" value="HrcA"/>
    <property type="match status" value="1"/>
</dbReference>
<dbReference type="InterPro" id="IPR029016">
    <property type="entry name" value="GAF-like_dom_sf"/>
</dbReference>
<dbReference type="InterPro" id="IPR002571">
    <property type="entry name" value="HrcA"/>
</dbReference>
<dbReference type="InterPro" id="IPR021153">
    <property type="entry name" value="HrcA_C"/>
</dbReference>
<dbReference type="InterPro" id="IPR036388">
    <property type="entry name" value="WH-like_DNA-bd_sf"/>
</dbReference>
<dbReference type="InterPro" id="IPR036390">
    <property type="entry name" value="WH_DNA-bd_sf"/>
</dbReference>
<dbReference type="InterPro" id="IPR023120">
    <property type="entry name" value="WHTH_transcript_rep_HrcA_IDD"/>
</dbReference>
<dbReference type="NCBIfam" id="TIGR00331">
    <property type="entry name" value="hrcA"/>
    <property type="match status" value="1"/>
</dbReference>
<dbReference type="PANTHER" id="PTHR34824">
    <property type="entry name" value="HEAT-INDUCIBLE TRANSCRIPTION REPRESSOR HRCA"/>
    <property type="match status" value="1"/>
</dbReference>
<dbReference type="PANTHER" id="PTHR34824:SF1">
    <property type="entry name" value="HEAT-INDUCIBLE TRANSCRIPTION REPRESSOR HRCA"/>
    <property type="match status" value="1"/>
</dbReference>
<dbReference type="Pfam" id="PF01628">
    <property type="entry name" value="HrcA"/>
    <property type="match status" value="1"/>
</dbReference>
<dbReference type="PIRSF" id="PIRSF005485">
    <property type="entry name" value="HrcA"/>
    <property type="match status" value="1"/>
</dbReference>
<dbReference type="SUPFAM" id="SSF55781">
    <property type="entry name" value="GAF domain-like"/>
    <property type="match status" value="1"/>
</dbReference>
<dbReference type="SUPFAM" id="SSF46785">
    <property type="entry name" value="Winged helix' DNA-binding domain"/>
    <property type="match status" value="1"/>
</dbReference>
<keyword id="KW-0678">Repressor</keyword>
<keyword id="KW-0346">Stress response</keyword>
<keyword id="KW-0804">Transcription</keyword>
<keyword id="KW-0805">Transcription regulation</keyword>
<reference key="1">
    <citation type="journal article" date="2007" name="PLoS ONE">
        <title>Molecular correlates of host specialization in Staphylococcus aureus.</title>
        <authorList>
            <person name="Herron-Olson L."/>
            <person name="Fitzgerald J.R."/>
            <person name="Musser J.M."/>
            <person name="Kapur V."/>
        </authorList>
    </citation>
    <scope>NUCLEOTIDE SEQUENCE [LARGE SCALE GENOMIC DNA]</scope>
    <source>
        <strain>bovine RF122 / ET3-1</strain>
    </source>
</reference>
<accession>Q2YT45</accession>
<feature type="chain" id="PRO_1000010452" description="Heat-inducible transcription repressor HrcA">
    <location>
        <begin position="1"/>
        <end position="325"/>
    </location>
</feature>
<sequence length="325" mass="36973">MITDRQLSILNAILEDYVDFGQPVGSKTLIERHNLNVSPATIRNEMKQLEDLNYIEKAHSSSGRSPSQLGFRYYVNRLLEQTSHQKTNKLRRLNQLLVENQYDVSSALTYFADELSNISQYTTLVVHPNHKQDIINNVHLIRANPNLVIMVIVFSSGHVEHVHLASDIPFSNDKLNTISNFVTNKLTEFNQNLQDDIVSFVQSEQEEIFINKLINTMNNHISNQSNSIYMGGKVKLIDALNESNVSSIQPILQYIESNRIAELLQDISSPNINVKIGNEIDDSLSDISIVTSQYHFDETLKGQIAVIGPTAMHYQNVIQLLNRIW</sequence>
<proteinExistence type="inferred from homology"/>
<name>HRCA_STAAB</name>
<evidence type="ECO:0000255" key="1">
    <source>
        <dbReference type="HAMAP-Rule" id="MF_00081"/>
    </source>
</evidence>